<protein>
    <recommendedName>
        <fullName evidence="1">Pyridinium-3,5-bisthiocarboxylic acid mononucleotide nickel insertion protein</fullName>
        <shortName evidence="1">P2TMN nickel insertion protein</shortName>
        <ecNumber evidence="1">4.99.1.12</ecNumber>
    </recommendedName>
    <alternativeName>
        <fullName evidence="1">Nickel-pincer cofactor biosynthesis protein LarC</fullName>
    </alternativeName>
</protein>
<proteinExistence type="inferred from homology"/>
<name>LARC_CLOK5</name>
<sequence length="399" mass="45124">MKILYYDCFCGISGDMNLAALIDLGVPKEYLMEELSKVNLNSEYEMKIERSVKLGITGTRVDVKLNESSHGEEEHGHDHYHHHRKLKDIEKIINSSHLSDKVKNISLGMFMKIAEAEAKIHGKSLCEVHFHEVGAIDSIVDLVGAAICIDYLKVDRIIASPVQVGGGFVECSHGIIPVPAPATTEILKNIPISTGIVQFETTTPTGAAILAVNVEEFTSKIDFSIEKIGYGIGHRDLEIPNVLRVYLGEQERSEKVEEQYILETNIDDMNPEFYEYVQERLFEVGALDVFKTPIYMKKGRPGINLSVLISEKGEKDVLDVIFEETTSIGVRKHKVEKIMLNRDFSKVKTEYGDITVKKSYYKGKLVKYKPEYEECKAIAKEKNISIDKIYKVVYRQDLN</sequence>
<gene>
    <name evidence="1" type="primary">larC</name>
    <name type="ordered locus">CKL_0332</name>
</gene>
<keyword id="KW-0456">Lyase</keyword>
<keyword id="KW-0533">Nickel</keyword>
<keyword id="KW-1185">Reference proteome</keyword>
<reference key="1">
    <citation type="journal article" date="2008" name="Proc. Natl. Acad. Sci. U.S.A.">
        <title>The genome of Clostridium kluyveri, a strict anaerobe with unique metabolic features.</title>
        <authorList>
            <person name="Seedorf H."/>
            <person name="Fricke W.F."/>
            <person name="Veith B."/>
            <person name="Brueggemann H."/>
            <person name="Liesegang H."/>
            <person name="Strittmatter A."/>
            <person name="Miethke M."/>
            <person name="Buckel W."/>
            <person name="Hinderberger J."/>
            <person name="Li F."/>
            <person name="Hagemeier C."/>
            <person name="Thauer R.K."/>
            <person name="Gottschalk G."/>
        </authorList>
    </citation>
    <scope>NUCLEOTIDE SEQUENCE [LARGE SCALE GENOMIC DNA]</scope>
    <source>
        <strain>ATCC 8527 / DSM 555 / NBRC 12016 / NCIMB 10680 / K1</strain>
    </source>
</reference>
<feature type="chain" id="PRO_1000084509" description="Pyridinium-3,5-bisthiocarboxylic acid mononucleotide nickel insertion protein">
    <location>
        <begin position="1"/>
        <end position="399"/>
    </location>
</feature>
<comment type="function">
    <text evidence="1">Involved in the biosynthesis of a nickel-pincer cofactor ((SCS)Ni(II) pincer complex). Binds Ni(2+), and functions in nickel delivery to pyridinium-3,5-bisthiocarboxylic acid mononucleotide (P2TMN), to form the mature cofactor. Is thus probably required for the activation of nickel-pincer cofactor-dependent enzymes.</text>
</comment>
<comment type="catalytic activity">
    <reaction evidence="1">
        <text>Ni(II)-pyridinium-3,5-bisthiocarboxylate mononucleotide = pyridinium-3,5-bisthiocarboxylate mononucleotide + Ni(2+)</text>
        <dbReference type="Rhea" id="RHEA:54784"/>
        <dbReference type="ChEBI" id="CHEBI:49786"/>
        <dbReference type="ChEBI" id="CHEBI:137372"/>
        <dbReference type="ChEBI" id="CHEBI:137373"/>
        <dbReference type="EC" id="4.99.1.12"/>
    </reaction>
</comment>
<comment type="similarity">
    <text evidence="1">Belongs to the LarC family.</text>
</comment>
<organism>
    <name type="scientific">Clostridium kluyveri (strain ATCC 8527 / DSM 555 / NBRC 12016 / NCIMB 10680 / K1)</name>
    <dbReference type="NCBI Taxonomy" id="431943"/>
    <lineage>
        <taxon>Bacteria</taxon>
        <taxon>Bacillati</taxon>
        <taxon>Bacillota</taxon>
        <taxon>Clostridia</taxon>
        <taxon>Eubacteriales</taxon>
        <taxon>Clostridiaceae</taxon>
        <taxon>Clostridium</taxon>
    </lineage>
</organism>
<accession>A5N505</accession>
<evidence type="ECO:0000255" key="1">
    <source>
        <dbReference type="HAMAP-Rule" id="MF_01074"/>
    </source>
</evidence>
<dbReference type="EC" id="4.99.1.12" evidence="1"/>
<dbReference type="EMBL" id="CP000673">
    <property type="protein sequence ID" value="EDK32386.1"/>
    <property type="molecule type" value="Genomic_DNA"/>
</dbReference>
<dbReference type="RefSeq" id="WP_011988901.1">
    <property type="nucleotide sequence ID" value="NC_009706.1"/>
</dbReference>
<dbReference type="SMR" id="A5N505"/>
<dbReference type="STRING" id="431943.CKL_0332"/>
<dbReference type="KEGG" id="ckl:CKL_0332"/>
<dbReference type="eggNOG" id="COG1641">
    <property type="taxonomic scope" value="Bacteria"/>
</dbReference>
<dbReference type="HOGENOM" id="CLU_028523_2_1_9"/>
<dbReference type="Proteomes" id="UP000002411">
    <property type="component" value="Chromosome"/>
</dbReference>
<dbReference type="GO" id="GO:0016829">
    <property type="term" value="F:lyase activity"/>
    <property type="evidence" value="ECO:0007669"/>
    <property type="project" value="UniProtKB-UniRule"/>
</dbReference>
<dbReference type="GO" id="GO:0016151">
    <property type="term" value="F:nickel cation binding"/>
    <property type="evidence" value="ECO:0007669"/>
    <property type="project" value="UniProtKB-UniRule"/>
</dbReference>
<dbReference type="GO" id="GO:0051604">
    <property type="term" value="P:protein maturation"/>
    <property type="evidence" value="ECO:0007669"/>
    <property type="project" value="UniProtKB-UniRule"/>
</dbReference>
<dbReference type="Gene3D" id="3.10.20.300">
    <property type="entry name" value="mk0293 like domain"/>
    <property type="match status" value="1"/>
</dbReference>
<dbReference type="Gene3D" id="3.30.70.1380">
    <property type="entry name" value="Transcriptional regulatory protein pf0864 domain like"/>
    <property type="match status" value="1"/>
</dbReference>
<dbReference type="HAMAP" id="MF_01074">
    <property type="entry name" value="LarC"/>
    <property type="match status" value="1"/>
</dbReference>
<dbReference type="InterPro" id="IPR002822">
    <property type="entry name" value="Ni_insertion"/>
</dbReference>
<dbReference type="NCBIfam" id="TIGR00299">
    <property type="entry name" value="nickel pincer cofactor biosynthesis protein LarC"/>
    <property type="match status" value="1"/>
</dbReference>
<dbReference type="PANTHER" id="PTHR36566">
    <property type="entry name" value="NICKEL INSERTION PROTEIN-RELATED"/>
    <property type="match status" value="1"/>
</dbReference>
<dbReference type="PANTHER" id="PTHR36566:SF1">
    <property type="entry name" value="PYRIDINIUM-3,5-BISTHIOCARBOXYLIC ACID MONONUCLEOTIDE NICKEL INSERTION PROTEIN"/>
    <property type="match status" value="1"/>
</dbReference>
<dbReference type="Pfam" id="PF01969">
    <property type="entry name" value="Ni_insertion"/>
    <property type="match status" value="1"/>
</dbReference>